<dbReference type="EMBL" id="M62642">
    <property type="protein sequence ID" value="AAA41337.1"/>
    <property type="molecule type" value="Genomic_DNA"/>
</dbReference>
<dbReference type="EMBL" id="X60006">
    <property type="protein sequence ID" value="CAA42621.1"/>
    <property type="molecule type" value="Genomic_DNA"/>
</dbReference>
<dbReference type="EMBL" id="BC091137">
    <property type="protein sequence ID" value="AAH91137.1"/>
    <property type="molecule type" value="mRNA"/>
</dbReference>
<dbReference type="PIR" id="A43079">
    <property type="entry name" value="OQRT"/>
</dbReference>
<dbReference type="RefSeq" id="NP_445770.1">
    <property type="nucleotide sequence ID" value="NM_053318.1"/>
</dbReference>
<dbReference type="SMR" id="P20059"/>
<dbReference type="FunCoup" id="P20059">
    <property type="interactions" value="159"/>
</dbReference>
<dbReference type="IntAct" id="P20059">
    <property type="interactions" value="1"/>
</dbReference>
<dbReference type="STRING" id="10116.ENSRNOP00000024710"/>
<dbReference type="ChEMBL" id="CHEMBL2176811"/>
<dbReference type="GlyCosmos" id="P20059">
    <property type="glycosylation" value="5 sites, No reported glycans"/>
</dbReference>
<dbReference type="GlyGen" id="P20059">
    <property type="glycosylation" value="5 sites"/>
</dbReference>
<dbReference type="iPTMnet" id="P20059"/>
<dbReference type="PhosphoSitePlus" id="P20059"/>
<dbReference type="SwissPalm" id="P20059"/>
<dbReference type="PaxDb" id="10116-ENSRNOP00000024710"/>
<dbReference type="Ensembl" id="ENSRNOT00000024710.6">
    <property type="protein sequence ID" value="ENSRNOP00000024710.2"/>
    <property type="gene ID" value="ENSRNOG00000018257.6"/>
</dbReference>
<dbReference type="GeneID" id="58917"/>
<dbReference type="KEGG" id="rno:58917"/>
<dbReference type="UCSC" id="RGD:62040">
    <property type="organism name" value="rat"/>
</dbReference>
<dbReference type="AGR" id="RGD:62040"/>
<dbReference type="CTD" id="3263"/>
<dbReference type="RGD" id="62040">
    <property type="gene designation" value="Hpx"/>
</dbReference>
<dbReference type="eggNOG" id="KOG1565">
    <property type="taxonomic scope" value="Eukaryota"/>
</dbReference>
<dbReference type="GeneTree" id="ENSGT00390000009178"/>
<dbReference type="HOGENOM" id="CLU_061713_0_0_1"/>
<dbReference type="InParanoid" id="P20059"/>
<dbReference type="OMA" id="CSSAMRW"/>
<dbReference type="OrthoDB" id="8953614at2759"/>
<dbReference type="PhylomeDB" id="P20059"/>
<dbReference type="TreeFam" id="TF331201"/>
<dbReference type="Reactome" id="R-RNO-2168880">
    <property type="pathway name" value="Scavenging of heme from plasma"/>
</dbReference>
<dbReference type="PRO" id="PR:P20059"/>
<dbReference type="Proteomes" id="UP000002494">
    <property type="component" value="Chromosome 1"/>
</dbReference>
<dbReference type="Bgee" id="ENSRNOG00000018257">
    <property type="expression patterns" value="Expressed in liver and 19 other cell types or tissues"/>
</dbReference>
<dbReference type="GO" id="GO:0005615">
    <property type="term" value="C:extracellular space"/>
    <property type="evidence" value="ECO:0000266"/>
    <property type="project" value="RGD"/>
</dbReference>
<dbReference type="GO" id="GO:0015232">
    <property type="term" value="F:heme transmembrane transporter activity"/>
    <property type="evidence" value="ECO:0007669"/>
    <property type="project" value="InterPro"/>
</dbReference>
<dbReference type="GO" id="GO:0046872">
    <property type="term" value="F:metal ion binding"/>
    <property type="evidence" value="ECO:0007669"/>
    <property type="project" value="UniProtKB-KW"/>
</dbReference>
<dbReference type="GO" id="GO:0042168">
    <property type="term" value="P:heme metabolic process"/>
    <property type="evidence" value="ECO:0000266"/>
    <property type="project" value="RGD"/>
</dbReference>
<dbReference type="GO" id="GO:0020027">
    <property type="term" value="P:hemoglobin metabolic process"/>
    <property type="evidence" value="ECO:0000266"/>
    <property type="project" value="RGD"/>
</dbReference>
<dbReference type="GO" id="GO:0006879">
    <property type="term" value="P:intracellular iron ion homeostasis"/>
    <property type="evidence" value="ECO:0007669"/>
    <property type="project" value="InterPro"/>
</dbReference>
<dbReference type="GO" id="GO:0002925">
    <property type="term" value="P:positive regulation of humoral immune response mediated by circulating immunoglobulin"/>
    <property type="evidence" value="ECO:0000266"/>
    <property type="project" value="RGD"/>
</dbReference>
<dbReference type="GO" id="GO:0002639">
    <property type="term" value="P:positive regulation of immunoglobulin production"/>
    <property type="evidence" value="ECO:0000266"/>
    <property type="project" value="RGD"/>
</dbReference>
<dbReference type="GO" id="GO:0060332">
    <property type="term" value="P:positive regulation of response to type II interferon"/>
    <property type="evidence" value="ECO:0000266"/>
    <property type="project" value="RGD"/>
</dbReference>
<dbReference type="GO" id="GO:0060335">
    <property type="term" value="P:positive regulation of type II interferon-mediated signaling pathway"/>
    <property type="evidence" value="ECO:0000266"/>
    <property type="project" value="RGD"/>
</dbReference>
<dbReference type="GO" id="GO:0051246">
    <property type="term" value="P:regulation of protein metabolic process"/>
    <property type="evidence" value="ECO:0000266"/>
    <property type="project" value="RGD"/>
</dbReference>
<dbReference type="GO" id="GO:0060333">
    <property type="term" value="P:type II interferon-mediated signaling pathway"/>
    <property type="evidence" value="ECO:0000266"/>
    <property type="project" value="RGD"/>
</dbReference>
<dbReference type="CDD" id="cd00094">
    <property type="entry name" value="HX"/>
    <property type="match status" value="2"/>
</dbReference>
<dbReference type="FunFam" id="2.110.10.10:FF:000009">
    <property type="entry name" value="Hemopexin"/>
    <property type="match status" value="1"/>
</dbReference>
<dbReference type="FunFam" id="2.110.10.10:FF:000013">
    <property type="entry name" value="Hemopexin"/>
    <property type="match status" value="1"/>
</dbReference>
<dbReference type="Gene3D" id="2.110.10.10">
    <property type="entry name" value="Hemopexin-like domain"/>
    <property type="match status" value="2"/>
</dbReference>
<dbReference type="InterPro" id="IPR051298">
    <property type="entry name" value="Heme_transport/Cell_adhesion"/>
</dbReference>
<dbReference type="InterPro" id="IPR016358">
    <property type="entry name" value="Hemopexin"/>
</dbReference>
<dbReference type="InterPro" id="IPR000585">
    <property type="entry name" value="Hemopexin-like_dom"/>
</dbReference>
<dbReference type="InterPro" id="IPR036375">
    <property type="entry name" value="Hemopexin-like_dom_sf"/>
</dbReference>
<dbReference type="InterPro" id="IPR018487">
    <property type="entry name" value="Hemopexin-like_repeat"/>
</dbReference>
<dbReference type="InterPro" id="IPR018486">
    <property type="entry name" value="Hemopexin_CS"/>
</dbReference>
<dbReference type="PANTHER" id="PTHR22917:SF9">
    <property type="entry name" value="HEMOPEXIN"/>
    <property type="match status" value="1"/>
</dbReference>
<dbReference type="PANTHER" id="PTHR22917">
    <property type="entry name" value="HEMOPEXIN DOMAIN-CONTAINING PROTEIN"/>
    <property type="match status" value="1"/>
</dbReference>
<dbReference type="Pfam" id="PF00045">
    <property type="entry name" value="Hemopexin"/>
    <property type="match status" value="4"/>
</dbReference>
<dbReference type="PIRSF" id="PIRSF002551">
    <property type="entry name" value="Hemopexin_chordata"/>
    <property type="match status" value="1"/>
</dbReference>
<dbReference type="SMART" id="SM00120">
    <property type="entry name" value="HX"/>
    <property type="match status" value="5"/>
</dbReference>
<dbReference type="SUPFAM" id="SSF50923">
    <property type="entry name" value="Hemopexin-like domain"/>
    <property type="match status" value="2"/>
</dbReference>
<dbReference type="PROSITE" id="PS00024">
    <property type="entry name" value="HEMOPEXIN"/>
    <property type="match status" value="1"/>
</dbReference>
<dbReference type="PROSITE" id="PS51642">
    <property type="entry name" value="HEMOPEXIN_2"/>
    <property type="match status" value="8"/>
</dbReference>
<evidence type="ECO:0000250" key="1"/>
<evidence type="ECO:0000255" key="2"/>
<evidence type="ECO:0000269" key="3">
    <source>
    </source>
</evidence>
<evidence type="ECO:0000305" key="4"/>
<reference key="1">
    <citation type="journal article" date="1991" name="Biochemistry">
        <title>Rat hemopexin. Molecular cloning, primary structural characterization, and analysis of gene expression.</title>
        <authorList>
            <person name="Nikkilae H."/>
            <person name="Gitlin J.D."/>
            <person name="Mueller-Eberhard U."/>
        </authorList>
    </citation>
    <scope>NUCLEOTIDE SEQUENCE [GENOMIC DNA]</scope>
    <source>
        <strain>Sprague-Dawley</strain>
        <tissue>Liver</tissue>
    </source>
</reference>
<reference key="2">
    <citation type="journal article" date="2004" name="Genome Res.">
        <title>The status, quality, and expansion of the NIH full-length cDNA project: the Mammalian Gene Collection (MGC).</title>
        <authorList>
            <consortium name="The MGC Project Team"/>
        </authorList>
    </citation>
    <scope>NUCLEOTIDE SEQUENCE [LARGE SCALE MRNA]</scope>
    <source>
        <tissue>Liver</tissue>
    </source>
</reference>
<reference key="3">
    <citation type="journal article" date="1992" name="Biochem. Biophys. Res. Commun.">
        <title>Identification of an interleukin-6 responsive element and characterization of the proximal promoter region of the rat hemopexin gene.</title>
        <authorList>
            <person name="Nagae Y."/>
            <person name="Mueller-Eberhard U."/>
        </authorList>
    </citation>
    <scope>NUCLEOTIDE SEQUENCE [GENOMIC DNA] OF 1-14</scope>
    <source>
        <strain>Sprague-Dawley</strain>
        <tissue>Liver</tissue>
    </source>
</reference>
<reference key="4">
    <citation type="journal article" date="1988" name="Biochem. Biophys. Res. Commun.">
        <title>N-terminal amino acid sequences of the hemopexins from chicken, rat and rabbit.</title>
        <authorList>
            <person name="Wellner D."/>
            <person name="Cheng K.C."/>
            <person name="Mueller-Eberhard U."/>
        </authorList>
    </citation>
    <scope>PROTEIN SEQUENCE OF 24-53</scope>
</reference>
<reference key="5">
    <citation type="journal article" date="1992" name="J. Biol. Chem.">
        <title>Hemopexin is synthesized in peripheral nerves but not in central nervous system and accumulates after axotomy.</title>
        <authorList>
            <person name="Swerts J.P."/>
            <person name="Soula C."/>
            <person name="Sagot Y."/>
            <person name="Guinaudy M.J."/>
            <person name="Guillemot J.-C."/>
            <person name="Ferrara P."/>
            <person name="Duprat A.-M."/>
            <person name="Cochard P."/>
        </authorList>
    </citation>
    <scope>NUCLEOTIDE SEQUENCE [GENOMIC DNA] OF 24-43</scope>
</reference>
<reference key="6">
    <citation type="submission" date="2006-11" db="UniProtKB">
        <authorList>
            <person name="Lubec G."/>
            <person name="Afjehi-Sadat L."/>
        </authorList>
    </citation>
    <scope>PROTEIN SEQUENCE OF 90-102; 151-165; 208-218; 255-269 AND 270-282</scope>
    <scope>IDENTIFICATION BY MASS SPECTROMETRY</scope>
    <source>
        <strain>Sprague-Dawley</strain>
        <tissue>Spinal cord</tissue>
    </source>
</reference>
<feature type="signal peptide" evidence="3">
    <location>
        <begin position="1"/>
        <end position="23"/>
    </location>
</feature>
<feature type="chain" id="PRO_0000021410" description="Hemopexin">
    <location>
        <begin position="24"/>
        <end position="460"/>
    </location>
</feature>
<feature type="repeat" description="Hemopexin 1">
    <location>
        <begin position="53"/>
        <end position="93"/>
    </location>
</feature>
<feature type="repeat" description="Hemopexin 2">
    <location>
        <begin position="94"/>
        <end position="138"/>
    </location>
</feature>
<feature type="repeat" description="Hemopexin 3">
    <location>
        <begin position="139"/>
        <end position="183"/>
    </location>
</feature>
<feature type="repeat" description="Hemopexin 4">
    <location>
        <begin position="184"/>
        <end position="230"/>
    </location>
</feature>
<feature type="repeat" description="Hemopexin 5">
    <location>
        <begin position="257"/>
        <end position="302"/>
    </location>
</feature>
<feature type="repeat" description="Hemopexin 6">
    <location>
        <begin position="303"/>
        <end position="350"/>
    </location>
</feature>
<feature type="repeat" description="Hemopexin 7">
    <location>
        <begin position="355"/>
        <end position="394"/>
    </location>
</feature>
<feature type="repeat" description="Hemopexin 8">
    <location>
        <begin position="398"/>
        <end position="448"/>
    </location>
</feature>
<feature type="binding site" description="axial binding residue" evidence="1">
    <location>
        <position position="79"/>
    </location>
    <ligand>
        <name>heme</name>
        <dbReference type="ChEBI" id="CHEBI:30413"/>
        <label>1</label>
    </ligand>
    <ligandPart>
        <name>Fe</name>
        <dbReference type="ChEBI" id="CHEBI:18248"/>
    </ligandPart>
</feature>
<feature type="binding site" description="axial binding residue" evidence="1">
    <location>
        <position position="149"/>
    </location>
    <ligand>
        <name>heme</name>
        <dbReference type="ChEBI" id="CHEBI:30413"/>
        <label>1</label>
    </ligand>
    <ligandPart>
        <name>Fe</name>
        <dbReference type="ChEBI" id="CHEBI:18248"/>
    </ligandPart>
</feature>
<feature type="binding site" description="axial binding residue" evidence="1">
    <location>
        <position position="235"/>
    </location>
    <ligand>
        <name>heme</name>
        <dbReference type="ChEBI" id="CHEBI:30413"/>
        <label>2</label>
    </ligand>
    <ligandPart>
        <name>Fe</name>
        <dbReference type="ChEBI" id="CHEBI:18248"/>
    </ligandPart>
</feature>
<feature type="binding site" description="axial binding residue" evidence="1">
    <location>
        <position position="291"/>
    </location>
    <ligand>
        <name>heme</name>
        <dbReference type="ChEBI" id="CHEBI:30413"/>
        <label>2</label>
    </ligand>
    <ligandPart>
        <name>Fe</name>
        <dbReference type="ChEBI" id="CHEBI:18248"/>
    </ligandPart>
</feature>
<feature type="glycosylation site" description="N-linked (GlcNAc...) asparagine" evidence="2">
    <location>
        <position position="38"/>
    </location>
</feature>
<feature type="glycosylation site" description="N-linked (GlcNAc...) asparagine" evidence="2">
    <location>
        <position position="64"/>
    </location>
</feature>
<feature type="glycosylation site" description="N-linked (GlcNAc...) asparagine" evidence="2">
    <location>
        <position position="186"/>
    </location>
</feature>
<feature type="glycosylation site" description="N-linked (GlcNAc...) asparagine" evidence="2">
    <location>
        <position position="240"/>
    </location>
</feature>
<feature type="glycosylation site" description="N-linked (GlcNAc...) asparagine" evidence="2">
    <location>
        <position position="246"/>
    </location>
</feature>
<feature type="disulfide bond" evidence="1">
    <location>
        <begin position="50"/>
        <end position="230"/>
    </location>
</feature>
<feature type="disulfide bond" evidence="1">
    <location>
        <begin position="148"/>
        <end position="153"/>
    </location>
</feature>
<feature type="disulfide bond" evidence="1">
    <location>
        <begin position="187"/>
        <end position="199"/>
    </location>
</feature>
<feature type="disulfide bond" evidence="1">
    <location>
        <begin position="255"/>
        <end position="458"/>
    </location>
</feature>
<feature type="disulfide bond" evidence="1">
    <location>
        <begin position="364"/>
        <end position="406"/>
    </location>
</feature>
<feature type="disulfide bond" evidence="1">
    <location>
        <begin position="416"/>
        <end position="433"/>
    </location>
</feature>
<feature type="sequence conflict" description="In Ref. 4; AA sequence." evidence="4" ref="4">
    <original>N</original>
    <variation>C</variation>
    <location>
        <position position="38"/>
    </location>
</feature>
<feature type="sequence conflict" description="In Ref. 4; AA sequence." evidence="4" ref="4">
    <original>HC</original>
    <variation>KW</variation>
    <location>
        <begin position="49"/>
        <end position="50"/>
    </location>
</feature>
<feature type="sequence conflict" description="In Ref. 1; AAA41337." evidence="4" ref="1">
    <original>F</original>
    <variation>S</variation>
    <location>
        <position position="135"/>
    </location>
</feature>
<comment type="function">
    <text>Binds heme and transports it to the liver for breakdown and iron recovery, after which the free hemopexin returns to the circulation.</text>
</comment>
<comment type="subcellular location">
    <subcellularLocation>
        <location>Secreted</location>
    </subcellularLocation>
</comment>
<comment type="tissue specificity">
    <text>Expressed by the liver and secreted in plasma.</text>
</comment>
<comment type="miscellaneous">
    <text evidence="1">The isolated N-terminal domain binds one heme. The full-length protein also binds one heme, but at a different site. The physiological significance of this is not clear (By similarity).</text>
</comment>
<comment type="similarity">
    <text evidence="4">Belongs to the hemopexin family.</text>
</comment>
<gene>
    <name type="primary">Hpx</name>
</gene>
<name>HEMO_RAT</name>
<organism>
    <name type="scientific">Rattus norvegicus</name>
    <name type="common">Rat</name>
    <dbReference type="NCBI Taxonomy" id="10116"/>
    <lineage>
        <taxon>Eukaryota</taxon>
        <taxon>Metazoa</taxon>
        <taxon>Chordata</taxon>
        <taxon>Craniata</taxon>
        <taxon>Vertebrata</taxon>
        <taxon>Euteleostomi</taxon>
        <taxon>Mammalia</taxon>
        <taxon>Eutheria</taxon>
        <taxon>Euarchontoglires</taxon>
        <taxon>Glires</taxon>
        <taxon>Rodentia</taxon>
        <taxon>Myomorpha</taxon>
        <taxon>Muroidea</taxon>
        <taxon>Muridae</taxon>
        <taxon>Murinae</taxon>
        <taxon>Rattus</taxon>
    </lineage>
</organism>
<keyword id="KW-0903">Direct protein sequencing</keyword>
<keyword id="KW-1015">Disulfide bond</keyword>
<keyword id="KW-0325">Glycoprotein</keyword>
<keyword id="KW-0349">Heme</keyword>
<keyword id="KW-0408">Iron</keyword>
<keyword id="KW-0479">Metal-binding</keyword>
<keyword id="KW-1185">Reference proteome</keyword>
<keyword id="KW-0677">Repeat</keyword>
<keyword id="KW-0964">Secreted</keyword>
<keyword id="KW-0732">Signal</keyword>
<keyword id="KW-0813">Transport</keyword>
<proteinExistence type="evidence at protein level"/>
<sequence length="460" mass="51351">MARTVVALNILVLLGLCWSLAVANPLPAAHETVAKGENGTKPDSDVIEHCSDAWSFDATTMDHNGTMLFFKGEFVWRGHSGIRELISERWKNPVTSVDAAFRGPDSVFLIKEDKVWVYPPEKKENGYPKLFQEEFPGIPYPPDAAVECHRGECQSEGVLFFQGNRKWFWDFATRTQKERSWPAVGNCTAALRWLERYYCFQGNKFLRFNPVTGEVPPRYPLDARDYFISCPGRGHGKLRNGTAHGNSTHPMHSRCNADPGLSALLSDHRGATYAFSGSHYWRLDSSRDGWHSWPIAHHWPQGPSAVDAAFSWDEKVYLIQGTQVYVFLTKGGNNLVSGYPKRLEKELGSPPGISLDTIDAAFSCPGSSKLYVTSGRRLWWLDLKSGAQATWAELSWPHEKVDGALCLEKSLGPYSCSSNGPNLFFIHGPNLYCYSSIDKLNAAKSLPQPQKVNSILGCSQ</sequence>
<accession>P20059</accession>
<accession>Q5BKB4</accession>
<protein>
    <recommendedName>
        <fullName>Hemopexin</fullName>
    </recommendedName>
</protein>